<comment type="function">
    <text evidence="2 9 10 11 12 13 14 15 16 17 18 19 20 21 22 26">Metabolic-stress sensing protein kinase that phosphorylates the alpha subunit of eukaryotic translation initiation factor 2 (EIF2S1/eIF-2-alpha) in response to low amino acid availability (PubMed:10504407, PubMed:10655230, PubMed:12176355, PubMed:12215525, PubMed:15213227, PubMed:15774759, PubMed:16054071, PubMed:16121183, PubMed:16176978, PubMed:16601681, PubMed:26102367). Plays a role as an activator of the integrated stress response (ISR) required for adaptation to amino acid starvation (PubMed:10655230, PubMed:11106749, PubMed:12176355, PubMed:15213227, PubMed:16176978, PubMed:26102367). EIF2S1/eIF-2-alpha phosphorylation in response to stress converts EIF2S1/eIF-2-alpha into a global protein synthesis inhibitor, leading to a global attenuation of cap-dependent translation, and thus to a reduced overall utilization of amino acids, while concomitantly initiating the preferential translation of ISR-specific mRNAs, such as the transcriptional activator ATF4, and hence allowing ATF4-mediated reprogramming of amino acid biosynthetic gene expression to alleviate nutrient depletion (PubMed:10655230, PubMed:11106749, PubMed:12176355, PubMed:15213227, PubMed:16176978, PubMed:26102367). Required for the translational induction of protein kinase PRKCH following amino acid starvation (PubMed:19797084). Binds uncharged tRNAs (By similarity). Involved in cell cycle arrest by promoting cyclin D1 mRNA translation repression after the unfolded protein response pathway (UPR) activation or cell cycle inhibitor CDKN1A/p21 mRNA translation activation in response to amino acid deprivation (PubMed:16176978, PubMed:26102367). Plays a role in the consolidation of synaptic plasticity, learning as well as formation of long-term memory (PubMed:16121183). Plays a role in neurite outgrowth inhibition (PubMed:23447528). Plays a role in feeding behavior to maintain amino acid homeostasis; contributes to the innate aversion toward diets of imbalanced amino acid composition (PubMed:15774759, PubMed:16054071). Plays a proapoptotic role in response to glucose deprivation (PubMed:20660158). Promotes global cellular protein synthesis repression in response to UV irradiation independently of the stress-activated protein kinase/c-Jun N-terminal kinase (SAPK/JNK) and p38 MAPK signaling pathways (PubMed:12176355).</text>
</comment>
<comment type="function">
    <text evidence="19">(Microbial infection) Plays a role in the antiviral response against alphavirus infection; impairs early viral mRNA translation of the incoming genomic virus RNA, thus preventing alphavirus replication.</text>
</comment>
<comment type="function">
    <text evidence="23">(Microbial infection) Plays a role in modulating the adaptive immune response to Yellow fever virus infection; promotes dendritic cells to initiate autophagy and antigene presentation to both CD4(+) and CD8(+) T-cells under amino acid starvation.</text>
</comment>
<comment type="catalytic activity">
    <reaction evidence="9 10 19">
        <text>L-seryl-[protein] + ATP = O-phospho-L-seryl-[protein] + ADP + H(+)</text>
        <dbReference type="Rhea" id="RHEA:17989"/>
        <dbReference type="Rhea" id="RHEA-COMP:9863"/>
        <dbReference type="Rhea" id="RHEA-COMP:11604"/>
        <dbReference type="ChEBI" id="CHEBI:15378"/>
        <dbReference type="ChEBI" id="CHEBI:29999"/>
        <dbReference type="ChEBI" id="CHEBI:30616"/>
        <dbReference type="ChEBI" id="CHEBI:83421"/>
        <dbReference type="ChEBI" id="CHEBI:456216"/>
        <dbReference type="EC" id="2.7.11.1"/>
    </reaction>
</comment>
<comment type="catalytic activity">
    <reaction evidence="9 10 19">
        <text>L-threonyl-[protein] + ATP = O-phospho-L-threonyl-[protein] + ADP + H(+)</text>
        <dbReference type="Rhea" id="RHEA:46608"/>
        <dbReference type="Rhea" id="RHEA-COMP:11060"/>
        <dbReference type="Rhea" id="RHEA-COMP:11605"/>
        <dbReference type="ChEBI" id="CHEBI:15378"/>
        <dbReference type="ChEBI" id="CHEBI:30013"/>
        <dbReference type="ChEBI" id="CHEBI:30616"/>
        <dbReference type="ChEBI" id="CHEBI:61977"/>
        <dbReference type="ChEBI" id="CHEBI:456216"/>
        <dbReference type="EC" id="2.7.11.1"/>
    </reaction>
</comment>
<comment type="activity regulation">
    <text evidence="9 19">(Microbial infection) Kinase activity is enhanced by alphavirus genomic RNA sequences (PubMed:16601681). Kinase activity is stimulated upon binding to uncharged tRNAs (PubMed:16601681). Activated by serum starvation (in vitro) (PubMed:10504407).</text>
</comment>
<comment type="subunit">
    <text evidence="2 3 24 25">Homodimer; homodimerization is important for kinase activation by uncharged tRNAs (By similarity). Interacts with GCN1; this interaction stimulates EIF2AK4/GCN2 kinase activity and is impaired by IMPACT upon a variety of stress conditions, such as amino acid depletion, UV-C irradiation, proteasome inhibitor treatment and glucose deprivation (PubMed:24333428). Interacts with DNAJC3; this interaction inhibits EIF2AK4/GCN2 kinase activity during endoplasmic reticulum (ER), hypothermic and amino acid-starving stress conditions (PubMed:25329545). Interacts with MAP3K20; activates EIF2AK4/GCN2 kinase activity in response to moderate ribotoxic stress (By similarity).</text>
</comment>
<comment type="subcellular location">
    <subcellularLocation>
        <location evidence="31">Cytoplasm</location>
    </subcellularLocation>
</comment>
<comment type="alternative products">
    <event type="alternative splicing"/>
    <isoform>
        <id>Q9QZ05-1</id>
        <name>1</name>
        <name>GCN2beta</name>
        <sequence type="displayed"/>
    </isoform>
    <isoform>
        <id>Q9QZ05-2</id>
        <name>2</name>
        <sequence type="described" ref="VSP_013042 VSP_013045"/>
    </isoform>
    <isoform>
        <id>Q9QZ05-3</id>
        <name>3</name>
        <name>GCN2gamma</name>
        <sequence type="described" ref="VSP_013043 VSP_013044"/>
    </isoform>
    <isoform>
        <id>Q9QZ05-4</id>
        <name>4</name>
        <name>GCN2alpha</name>
        <sequence type="described" ref="VSP_013040"/>
    </isoform>
    <isoform>
        <id>Q9QZ05-5</id>
        <name>5</name>
        <sequence type="described" ref="VSP_013039 VSP_013048 VSP_013049 VSP_013050"/>
    </isoform>
    <isoform>
        <id>Q9QZ05-6</id>
        <name>6</name>
        <sequence type="described" ref="VSP_013041 VSP_013046 VSP_013047"/>
    </isoform>
</comment>
<comment type="tissue specificity">
    <text evidence="9 10 13 17">Expressed in liver (PubMed:10504407). Expressed predominantly in the hippocampal CA1 region and the dentate gyrus, and to a lesser degree in CA3 (at protein level) (PubMed:16121183). Expressed in liver, lung, brain, kidney, skeletal muscle and testis (PubMed:10504407, PubMed:10655230). Expressed weakly in heart and spleen (PubMed:10655230). Expressed in the hippocampal CA1 and CA3 regions, the dentate gyrus and cerebellum (PubMed:16121183). Isoform 1 is widely expressed (PubMed:12215525). Isoform 1 is expressed in brain, liver, skeletal muscle and testis (PubMed:10655230). Isoform 3 is expressed in lung, brain, testis, prostate and choroid plexus (PubMed:12215525). Isoform 4 is expressed in muscle, lung, kidney, brain, testis and prostate (PubMed:10655230, PubMed:12215525).</text>
</comment>
<comment type="domain">
    <text evidence="9 10">The histidyl-tRNA synthetase-like region and protein kinase domains are necessary for eIF-2-alpha kinase activity and eIF-2-alpha-mediated translational control (PubMed:10655230). The histidyl-tRNA synthetase-like domain is necessary for binding to uncharged tRNAs (PubMed:16601681). Kinase domain 1 is a degenerate kinase domain (PubMed:10504407).</text>
</comment>
<comment type="PTM">
    <text evidence="9 10 11 12 19 24">Autophosphorylated; autophosphorylation on Thr-898 is increased upon amino acid starvation and in UV irradiation cells and inhibited in presence of IMPACT (PubMed:10504407, PubMed:10655230, PubMed:11106749, PubMed:12176355, PubMed:16601681, PubMed:24333428).</text>
</comment>
<comment type="disruption phenotype">
    <text evidence="13 14 16 17 19 23">Mice are viable, fertile, and exhibit no phenotypic abnormalities under standard growth conditions (PubMed:12215525). Show an increase in prenatal and neonatal mortalities when essential amino acids are absent in the maternal diet during gestation (PubMed:12215525, PubMed:15213227). In response to nutrient deprivation, display reduced abilities to chronically down-regulate hepatic protein synthesis, resulting in preservation of liver mass relative to body size and enhanced skeletal muscle loss (PubMed:15213227). Mice exhibit a lowered threshold for the induction of strong and robust long-term potentiation (LTP) in the CA1 neurons of the hippocampus and the consolidation of long-term memory (PubMed:16121183). Knockout and conditional knockout in the brain result in a diminution of the rate of food consumption and an impairment in the food aversion response in mice fed an imbalanced amino acid diet (PubMed:16054071). Mice are more susceptible to intranasal Sindbis virus infection, with high virus titers in the brain compared to similarly infected control animals (PubMed:16601681). Mice infected with yellow fever virus show a decrease in dendritic cell autophagy and an impairment in their capacity to present antigens to T-cells under amino acid starvation (PubMed:24310610).</text>
</comment>
<comment type="similarity">
    <text evidence="5">Belongs to the protein kinase superfamily. Ser/Thr protein kinase family. GCN2 subfamily.</text>
</comment>
<dbReference type="EC" id="2.7.11.1" evidence="9 10 19"/>
<dbReference type="EMBL" id="AJ243533">
    <property type="protein sequence ID" value="CAB58363.1"/>
    <property type="molecule type" value="mRNA"/>
</dbReference>
<dbReference type="EMBL" id="AF193342">
    <property type="protein sequence ID" value="AAG22589.1"/>
    <property type="molecule type" value="mRNA"/>
</dbReference>
<dbReference type="EMBL" id="AF193343">
    <property type="protein sequence ID" value="AAG22590.1"/>
    <property type="molecule type" value="mRNA"/>
</dbReference>
<dbReference type="EMBL" id="AF193344">
    <property type="protein sequence ID" value="AAG22591.1"/>
    <property type="molecule type" value="mRNA"/>
</dbReference>
<dbReference type="EMBL" id="AK011380">
    <property type="protein sequence ID" value="BAB27580.1"/>
    <property type="molecule type" value="mRNA"/>
</dbReference>
<dbReference type="EMBL" id="AK013758">
    <property type="protein sequence ID" value="BAB28984.1"/>
    <property type="molecule type" value="mRNA"/>
</dbReference>
<dbReference type="EMBL" id="AK077199">
    <property type="protein sequence ID" value="BAC36677.1"/>
    <property type="molecule type" value="mRNA"/>
</dbReference>
<dbReference type="EMBL" id="AL929163">
    <property type="status" value="NOT_ANNOTATED_CDS"/>
    <property type="molecule type" value="Genomic_DNA"/>
</dbReference>
<dbReference type="EMBL" id="BC023958">
    <property type="protein sequence ID" value="AAH23958.1"/>
    <property type="molecule type" value="mRNA"/>
</dbReference>
<dbReference type="EMBL" id="BC072637">
    <property type="protein sequence ID" value="AAH72637.1"/>
    <property type="molecule type" value="mRNA"/>
</dbReference>
<dbReference type="EMBL" id="AK129334">
    <property type="protein sequence ID" value="BAC98144.2"/>
    <property type="molecule type" value="Transcribed_RNA"/>
</dbReference>
<dbReference type="CCDS" id="CCDS16576.1">
    <molecule id="Q9QZ05-1"/>
</dbReference>
<dbReference type="CCDS" id="CCDS50669.1">
    <molecule id="Q9QZ05-2"/>
</dbReference>
<dbReference type="RefSeq" id="NP_001171277.1">
    <molecule id="Q9QZ05-2"/>
    <property type="nucleotide sequence ID" value="NM_001177806.2"/>
</dbReference>
<dbReference type="RefSeq" id="NP_001408350.1">
    <molecule id="Q9QZ05-2"/>
    <property type="nucleotide sequence ID" value="NM_001421421.1"/>
</dbReference>
<dbReference type="RefSeq" id="NP_038747.2">
    <property type="nucleotide sequence ID" value="NM_013719.3"/>
</dbReference>
<dbReference type="RefSeq" id="XP_006499688.1">
    <property type="nucleotide sequence ID" value="XM_006499625.3"/>
</dbReference>
<dbReference type="PDB" id="1UKX">
    <property type="method" value="NMR"/>
    <property type="chains" value="A=17-139"/>
</dbReference>
<dbReference type="PDB" id="4OTN">
    <property type="method" value="X-ray"/>
    <property type="resolution" value="1.90 A"/>
    <property type="chains" value="A/B=1514-1648"/>
</dbReference>
<dbReference type="PDBsum" id="1UKX"/>
<dbReference type="PDBsum" id="4OTN"/>
<dbReference type="SMR" id="Q9QZ05"/>
<dbReference type="BioGRID" id="205123">
    <property type="interactions" value="7"/>
</dbReference>
<dbReference type="FunCoup" id="Q9QZ05">
    <property type="interactions" value="2955"/>
</dbReference>
<dbReference type="STRING" id="10090.ENSMUSP00000005233"/>
<dbReference type="TCDB" id="8.A.23.1.65">
    <property type="family name" value="the basigin (basigin) family"/>
</dbReference>
<dbReference type="iPTMnet" id="Q9QZ05"/>
<dbReference type="PhosphoSitePlus" id="Q9QZ05"/>
<dbReference type="jPOST" id="Q9QZ05"/>
<dbReference type="PaxDb" id="10090-ENSMUSP00000005233"/>
<dbReference type="PeptideAtlas" id="Q9QZ05"/>
<dbReference type="ProteomicsDB" id="279597">
    <molecule id="Q9QZ05-1"/>
</dbReference>
<dbReference type="ProteomicsDB" id="279598">
    <molecule id="Q9QZ05-2"/>
</dbReference>
<dbReference type="ProteomicsDB" id="279599">
    <molecule id="Q9QZ05-3"/>
</dbReference>
<dbReference type="ProteomicsDB" id="279600">
    <molecule id="Q9QZ05-4"/>
</dbReference>
<dbReference type="ProteomicsDB" id="279601">
    <molecule id="Q9QZ05-5"/>
</dbReference>
<dbReference type="ProteomicsDB" id="279602">
    <molecule id="Q9QZ05-6"/>
</dbReference>
<dbReference type="Pumba" id="Q9QZ05"/>
<dbReference type="Antibodypedia" id="22934">
    <property type="antibodies" value="419 antibodies from 37 providers"/>
</dbReference>
<dbReference type="DNASU" id="27103"/>
<dbReference type="Ensembl" id="ENSMUST00000102527.10">
    <molecule id="Q9QZ05-2"/>
    <property type="protein sequence ID" value="ENSMUSP00000099586.4"/>
    <property type="gene ID" value="ENSMUSG00000005102.14"/>
</dbReference>
<dbReference type="Ensembl" id="ENSMUST00000110869.2">
    <molecule id="Q9QZ05-5"/>
    <property type="protein sequence ID" value="ENSMUSP00000106493.2"/>
    <property type="gene ID" value="ENSMUSG00000005102.14"/>
</dbReference>
<dbReference type="Ensembl" id="ENSMUST00000110870.8">
    <molecule id="Q9QZ05-4"/>
    <property type="protein sequence ID" value="ENSMUSP00000106494.2"/>
    <property type="gene ID" value="ENSMUSG00000005102.14"/>
</dbReference>
<dbReference type="GeneID" id="27103"/>
<dbReference type="KEGG" id="mmu:27103"/>
<dbReference type="UCSC" id="uc008lrx.2">
    <molecule id="Q9QZ05-2"/>
    <property type="organism name" value="mouse"/>
</dbReference>
<dbReference type="UCSC" id="uc008lry.1">
    <molecule id="Q9QZ05-1"/>
    <property type="organism name" value="mouse"/>
</dbReference>
<dbReference type="UCSC" id="uc008lrz.1">
    <molecule id="Q9QZ05-5"/>
    <property type="organism name" value="mouse"/>
</dbReference>
<dbReference type="AGR" id="MGI:1353427"/>
<dbReference type="CTD" id="440275"/>
<dbReference type="MGI" id="MGI:1353427">
    <property type="gene designation" value="Eif2ak4"/>
</dbReference>
<dbReference type="VEuPathDB" id="HostDB:ENSMUSG00000005102"/>
<dbReference type="eggNOG" id="KOG1035">
    <property type="taxonomic scope" value="Eukaryota"/>
</dbReference>
<dbReference type="GeneTree" id="ENSGT00940000156798"/>
<dbReference type="HOGENOM" id="CLU_001222_1_0_1"/>
<dbReference type="InParanoid" id="Q9QZ05"/>
<dbReference type="OMA" id="FEDIAWD"/>
<dbReference type="OrthoDB" id="6778822at2759"/>
<dbReference type="PhylomeDB" id="Q9QZ05"/>
<dbReference type="BRENDA" id="2.7.11.20">
    <property type="organism ID" value="3474"/>
</dbReference>
<dbReference type="BioGRID-ORCS" id="27103">
    <property type="hits" value="8 hits in 85 CRISPR screens"/>
</dbReference>
<dbReference type="ChiTaRS" id="Eif2ak4">
    <property type="organism name" value="mouse"/>
</dbReference>
<dbReference type="EvolutionaryTrace" id="Q9QZ05"/>
<dbReference type="PRO" id="PR:Q9QZ05"/>
<dbReference type="Proteomes" id="UP000000589">
    <property type="component" value="Chromosome 2"/>
</dbReference>
<dbReference type="RNAct" id="Q9QZ05">
    <property type="molecule type" value="protein"/>
</dbReference>
<dbReference type="Bgee" id="ENSMUSG00000005102">
    <property type="expression patterns" value="Expressed in renal medulla collecting duct and 234 other cell types or tissues"/>
</dbReference>
<dbReference type="ExpressionAtlas" id="Q9QZ05">
    <property type="expression patterns" value="baseline and differential"/>
</dbReference>
<dbReference type="GO" id="GO:0005737">
    <property type="term" value="C:cytoplasm"/>
    <property type="evidence" value="ECO:0000314"/>
    <property type="project" value="UniProtKB"/>
</dbReference>
<dbReference type="GO" id="GO:0022626">
    <property type="term" value="C:cytosolic ribosome"/>
    <property type="evidence" value="ECO:0000250"/>
    <property type="project" value="UniProtKB"/>
</dbReference>
<dbReference type="GO" id="GO:0005524">
    <property type="term" value="F:ATP binding"/>
    <property type="evidence" value="ECO:0007669"/>
    <property type="project" value="UniProtKB-KW"/>
</dbReference>
<dbReference type="GO" id="GO:0071074">
    <property type="term" value="F:eukaryotic initiation factor eIF2 binding"/>
    <property type="evidence" value="ECO:0000305"/>
    <property type="project" value="ParkinsonsUK-UCL"/>
</dbReference>
<dbReference type="GO" id="GO:0004694">
    <property type="term" value="F:eukaryotic translation initiation factor 2alpha kinase activity"/>
    <property type="evidence" value="ECO:0000314"/>
    <property type="project" value="UniProtKB"/>
</dbReference>
<dbReference type="GO" id="GO:0106310">
    <property type="term" value="F:protein serine kinase activity"/>
    <property type="evidence" value="ECO:0007669"/>
    <property type="project" value="RHEA"/>
</dbReference>
<dbReference type="GO" id="GO:0004674">
    <property type="term" value="F:protein serine/threonine kinase activity"/>
    <property type="evidence" value="ECO:0000314"/>
    <property type="project" value="UniProtKB"/>
</dbReference>
<dbReference type="GO" id="GO:0000049">
    <property type="term" value="F:tRNA binding"/>
    <property type="evidence" value="ECO:0000314"/>
    <property type="project" value="UniProtKB"/>
</dbReference>
<dbReference type="GO" id="GO:0002250">
    <property type="term" value="P:adaptive immune response"/>
    <property type="evidence" value="ECO:0007669"/>
    <property type="project" value="UniProtKB-KW"/>
</dbReference>
<dbReference type="GO" id="GO:0034198">
    <property type="term" value="P:cellular response to amino acid starvation"/>
    <property type="evidence" value="ECO:0000314"/>
    <property type="project" value="UniProtKB"/>
</dbReference>
<dbReference type="GO" id="GO:0070417">
    <property type="term" value="P:cellular response to cold"/>
    <property type="evidence" value="ECO:0000250"/>
    <property type="project" value="UniProtKB"/>
</dbReference>
<dbReference type="GO" id="GO:0009267">
    <property type="term" value="P:cellular response to starvation"/>
    <property type="evidence" value="ECO:0000314"/>
    <property type="project" value="MGI"/>
</dbReference>
<dbReference type="GO" id="GO:0034644">
    <property type="term" value="P:cellular response to UV"/>
    <property type="evidence" value="ECO:0000314"/>
    <property type="project" value="UniProtKB"/>
</dbReference>
<dbReference type="GO" id="GO:0051607">
    <property type="term" value="P:defense response to virus"/>
    <property type="evidence" value="ECO:0007669"/>
    <property type="project" value="UniProtKB-KW"/>
</dbReference>
<dbReference type="GO" id="GO:0000077">
    <property type="term" value="P:DNA damage checkpoint signaling"/>
    <property type="evidence" value="ECO:0007669"/>
    <property type="project" value="InterPro"/>
</dbReference>
<dbReference type="GO" id="GO:0030968">
    <property type="term" value="P:endoplasmic reticulum unfolded protein response"/>
    <property type="evidence" value="ECO:0000315"/>
    <property type="project" value="MGI"/>
</dbReference>
<dbReference type="GO" id="GO:0140469">
    <property type="term" value="P:GCN2-mediated signaling"/>
    <property type="evidence" value="ECO:0000314"/>
    <property type="project" value="UniProtKB"/>
</dbReference>
<dbReference type="GO" id="GO:0007612">
    <property type="term" value="P:learning"/>
    <property type="evidence" value="ECO:0000315"/>
    <property type="project" value="UniProtKB"/>
</dbReference>
<dbReference type="GO" id="GO:0007616">
    <property type="term" value="P:long-term memory"/>
    <property type="evidence" value="ECO:0000315"/>
    <property type="project" value="UniProtKB"/>
</dbReference>
<dbReference type="GO" id="GO:0044828">
    <property type="term" value="P:negative regulation by host of viral genome replication"/>
    <property type="evidence" value="ECO:0000314"/>
    <property type="project" value="UniProtKB"/>
</dbReference>
<dbReference type="GO" id="GO:0032792">
    <property type="term" value="P:negative regulation of CREB transcription factor activity"/>
    <property type="evidence" value="ECO:0000315"/>
    <property type="project" value="UniProtKB"/>
</dbReference>
<dbReference type="GO" id="GO:0045665">
    <property type="term" value="P:negative regulation of neuron differentiation"/>
    <property type="evidence" value="ECO:0000315"/>
    <property type="project" value="UniProtKB"/>
</dbReference>
<dbReference type="GO" id="GO:0017148">
    <property type="term" value="P:negative regulation of translation"/>
    <property type="evidence" value="ECO:0000316"/>
    <property type="project" value="MGI"/>
</dbReference>
<dbReference type="GO" id="GO:0045947">
    <property type="term" value="P:negative regulation of translational initiation"/>
    <property type="evidence" value="ECO:0000314"/>
    <property type="project" value="UniProtKB"/>
</dbReference>
<dbReference type="GO" id="GO:0032057">
    <property type="term" value="P:negative regulation of translational initiation in response to stress"/>
    <property type="evidence" value="ECO:0000314"/>
    <property type="project" value="UniProtKB"/>
</dbReference>
<dbReference type="GO" id="GO:1990138">
    <property type="term" value="P:neuron projection extension"/>
    <property type="evidence" value="ECO:0000315"/>
    <property type="project" value="UniProtKB"/>
</dbReference>
<dbReference type="GO" id="GO:0002821">
    <property type="term" value="P:positive regulation of adaptive immune response"/>
    <property type="evidence" value="ECO:0000315"/>
    <property type="project" value="UniProtKB"/>
</dbReference>
<dbReference type="GO" id="GO:0002230">
    <property type="term" value="P:positive regulation of defense response to virus by host"/>
    <property type="evidence" value="ECO:0000314"/>
    <property type="project" value="UniProtKB"/>
</dbReference>
<dbReference type="GO" id="GO:0010628">
    <property type="term" value="P:positive regulation of gene expression"/>
    <property type="evidence" value="ECO:0000315"/>
    <property type="project" value="ParkinsonsUK-UCL"/>
</dbReference>
<dbReference type="GO" id="GO:1900273">
    <property type="term" value="P:positive regulation of long-term synaptic potentiation"/>
    <property type="evidence" value="ECO:0000315"/>
    <property type="project" value="UniProtKB"/>
</dbReference>
<dbReference type="GO" id="GO:0071264">
    <property type="term" value="P:positive regulation of translational initiation in response to starvation"/>
    <property type="evidence" value="ECO:0000314"/>
    <property type="project" value="UniProtKB"/>
</dbReference>
<dbReference type="GO" id="GO:0046777">
    <property type="term" value="P:protein autophosphorylation"/>
    <property type="evidence" value="ECO:0000314"/>
    <property type="project" value="UniProtKB"/>
</dbReference>
<dbReference type="GO" id="GO:0006468">
    <property type="term" value="P:protein phosphorylation"/>
    <property type="evidence" value="ECO:0000314"/>
    <property type="project" value="UniProtKB"/>
</dbReference>
<dbReference type="GO" id="GO:1990611">
    <property type="term" value="P:regulation of cytoplasmic translational initiation in response to stress"/>
    <property type="evidence" value="ECO:0000314"/>
    <property type="project" value="UniProtKB"/>
</dbReference>
<dbReference type="GO" id="GO:0060259">
    <property type="term" value="P:regulation of feeding behavior"/>
    <property type="evidence" value="ECO:0000315"/>
    <property type="project" value="UniProtKB"/>
</dbReference>
<dbReference type="GO" id="GO:0006446">
    <property type="term" value="P:regulation of translational initiation"/>
    <property type="evidence" value="ECO:0000316"/>
    <property type="project" value="ParkinsonsUK-UCL"/>
</dbReference>
<dbReference type="GO" id="GO:0010998">
    <property type="term" value="P:regulation of translational initiation by eIF2 alpha phosphorylation"/>
    <property type="evidence" value="ECO:0000314"/>
    <property type="project" value="UniProtKB"/>
</dbReference>
<dbReference type="GO" id="GO:0043558">
    <property type="term" value="P:regulation of translational initiation in response to stress"/>
    <property type="evidence" value="ECO:0000314"/>
    <property type="project" value="MGI"/>
</dbReference>
<dbReference type="GO" id="GO:0034976">
    <property type="term" value="P:response to endoplasmic reticulum stress"/>
    <property type="evidence" value="ECO:0000316"/>
    <property type="project" value="ParkinsonsUK-UCL"/>
</dbReference>
<dbReference type="GO" id="GO:0002286">
    <property type="term" value="P:T cell activation involved in immune response"/>
    <property type="evidence" value="ECO:0000315"/>
    <property type="project" value="UniProtKB"/>
</dbReference>
<dbReference type="GO" id="GO:0019081">
    <property type="term" value="P:viral translation"/>
    <property type="evidence" value="ECO:0000314"/>
    <property type="project" value="UniProtKB"/>
</dbReference>
<dbReference type="CDD" id="cd14012">
    <property type="entry name" value="PK_eIF2AK_GCN2_rpt1"/>
    <property type="match status" value="1"/>
</dbReference>
<dbReference type="CDD" id="cd23823">
    <property type="entry name" value="RWD_GCN2"/>
    <property type="match status" value="1"/>
</dbReference>
<dbReference type="CDD" id="cd14046">
    <property type="entry name" value="STKc_EIF2AK4_GCN2_rpt2"/>
    <property type="match status" value="1"/>
</dbReference>
<dbReference type="FunFam" id="1.10.510.10:FF:000338">
    <property type="entry name" value="Eukaryotic translation initiation factor 2-alpha kinase"/>
    <property type="match status" value="1"/>
</dbReference>
<dbReference type="FunFam" id="3.40.50.800:FF:000009">
    <property type="entry name" value="Eukaryotic translation initiation factor 2-alpha kinase"/>
    <property type="match status" value="1"/>
</dbReference>
<dbReference type="FunFam" id="1.10.510.10:FF:000353">
    <property type="entry name" value="Eukaryotic translation initiation factor 2-alpha kinase 4"/>
    <property type="match status" value="1"/>
</dbReference>
<dbReference type="FunFam" id="3.30.200.20:FF:000308">
    <property type="entry name" value="Eukaryotic translation initiation factor 2-alpha kinase 4"/>
    <property type="match status" value="1"/>
</dbReference>
<dbReference type="FunFam" id="3.30.930.10:FF:000031">
    <property type="entry name" value="Eukaryotic translation initiation factor 2-alpha kinase 4"/>
    <property type="match status" value="1"/>
</dbReference>
<dbReference type="FunFam" id="3.10.110.10:FF:000057">
    <property type="entry name" value="eukaryotic translation initiation factor 2-alpha kinase 4"/>
    <property type="match status" value="1"/>
</dbReference>
<dbReference type="Gene3D" id="3.40.50.800">
    <property type="entry name" value="Anticodon-binding domain"/>
    <property type="match status" value="1"/>
</dbReference>
<dbReference type="Gene3D" id="3.30.930.10">
    <property type="entry name" value="Bira Bifunctional Protein, Domain 2"/>
    <property type="match status" value="1"/>
</dbReference>
<dbReference type="Gene3D" id="3.30.200.20">
    <property type="entry name" value="Phosphorylase Kinase, domain 1"/>
    <property type="match status" value="1"/>
</dbReference>
<dbReference type="Gene3D" id="1.10.510.10">
    <property type="entry name" value="Transferase(Phosphotransferase) domain 1"/>
    <property type="match status" value="2"/>
</dbReference>
<dbReference type="Gene3D" id="3.10.110.10">
    <property type="entry name" value="Ubiquitin Conjugating Enzyme"/>
    <property type="match status" value="1"/>
</dbReference>
<dbReference type="InterPro" id="IPR045864">
    <property type="entry name" value="aa-tRNA-synth_II/BPL/LPL"/>
</dbReference>
<dbReference type="InterPro" id="IPR036621">
    <property type="entry name" value="Anticodon-bd_dom_sf"/>
</dbReference>
<dbReference type="InterPro" id="IPR050339">
    <property type="entry name" value="CC_SR_Kinase"/>
</dbReference>
<dbReference type="InterPro" id="IPR016255">
    <property type="entry name" value="Gcn2"/>
</dbReference>
<dbReference type="InterPro" id="IPR041715">
    <property type="entry name" value="HisRS-like_core"/>
</dbReference>
<dbReference type="InterPro" id="IPR024435">
    <property type="entry name" value="HisRS-related_dom"/>
</dbReference>
<dbReference type="InterPro" id="IPR011009">
    <property type="entry name" value="Kinase-like_dom_sf"/>
</dbReference>
<dbReference type="InterPro" id="IPR000719">
    <property type="entry name" value="Prot_kinase_dom"/>
</dbReference>
<dbReference type="InterPro" id="IPR017441">
    <property type="entry name" value="Protein_kinase_ATP_BS"/>
</dbReference>
<dbReference type="InterPro" id="IPR006575">
    <property type="entry name" value="RWD_dom"/>
</dbReference>
<dbReference type="InterPro" id="IPR008271">
    <property type="entry name" value="Ser/Thr_kinase_AS"/>
</dbReference>
<dbReference type="InterPro" id="IPR016135">
    <property type="entry name" value="UBQ-conjugating_enzyme/RWD"/>
</dbReference>
<dbReference type="PANTHER" id="PTHR11042">
    <property type="entry name" value="EUKARYOTIC TRANSLATION INITIATION FACTOR 2-ALPHA KINASE EIF2-ALPHA KINASE -RELATED"/>
    <property type="match status" value="1"/>
</dbReference>
<dbReference type="Pfam" id="PF12745">
    <property type="entry name" value="HGTP_anticodon2"/>
    <property type="match status" value="1"/>
</dbReference>
<dbReference type="Pfam" id="PF00069">
    <property type="entry name" value="Pkinase"/>
    <property type="match status" value="3"/>
</dbReference>
<dbReference type="Pfam" id="PF05773">
    <property type="entry name" value="RWD"/>
    <property type="match status" value="1"/>
</dbReference>
<dbReference type="Pfam" id="PF13393">
    <property type="entry name" value="tRNA-synt_His"/>
    <property type="match status" value="1"/>
</dbReference>
<dbReference type="PIRSF" id="PIRSF000660">
    <property type="entry name" value="Ser/Thr_PK_GCN2"/>
    <property type="match status" value="1"/>
</dbReference>
<dbReference type="SMART" id="SM00591">
    <property type="entry name" value="RWD"/>
    <property type="match status" value="1"/>
</dbReference>
<dbReference type="SMART" id="SM00220">
    <property type="entry name" value="S_TKc"/>
    <property type="match status" value="2"/>
</dbReference>
<dbReference type="SUPFAM" id="SSF55681">
    <property type="entry name" value="Class II aaRS and biotin synthetases"/>
    <property type="match status" value="1"/>
</dbReference>
<dbReference type="SUPFAM" id="SSF56112">
    <property type="entry name" value="Protein kinase-like (PK-like)"/>
    <property type="match status" value="2"/>
</dbReference>
<dbReference type="SUPFAM" id="SSF54495">
    <property type="entry name" value="UBC-like"/>
    <property type="match status" value="1"/>
</dbReference>
<dbReference type="PROSITE" id="PS00107">
    <property type="entry name" value="PROTEIN_KINASE_ATP"/>
    <property type="match status" value="1"/>
</dbReference>
<dbReference type="PROSITE" id="PS50011">
    <property type="entry name" value="PROTEIN_KINASE_DOM"/>
    <property type="match status" value="2"/>
</dbReference>
<dbReference type="PROSITE" id="PS00108">
    <property type="entry name" value="PROTEIN_KINASE_ST"/>
    <property type="match status" value="1"/>
</dbReference>
<dbReference type="PROSITE" id="PS50908">
    <property type="entry name" value="RWD"/>
    <property type="match status" value="1"/>
</dbReference>
<organism>
    <name type="scientific">Mus musculus</name>
    <name type="common">Mouse</name>
    <dbReference type="NCBI Taxonomy" id="10090"/>
    <lineage>
        <taxon>Eukaryota</taxon>
        <taxon>Metazoa</taxon>
        <taxon>Chordata</taxon>
        <taxon>Craniata</taxon>
        <taxon>Vertebrata</taxon>
        <taxon>Euteleostomi</taxon>
        <taxon>Mammalia</taxon>
        <taxon>Eutheria</taxon>
        <taxon>Euarchontoglires</taxon>
        <taxon>Glires</taxon>
        <taxon>Rodentia</taxon>
        <taxon>Myomorpha</taxon>
        <taxon>Muroidea</taxon>
        <taxon>Muridae</taxon>
        <taxon>Murinae</taxon>
        <taxon>Mus</taxon>
        <taxon>Mus</taxon>
    </lineage>
</organism>
<proteinExistence type="evidence at protein level"/>
<protein>
    <recommendedName>
        <fullName evidence="30">eIF-2-alpha kinase GCN2</fullName>
    </recommendedName>
    <alternativeName>
        <fullName evidence="32">Eukaryotic translation initiation factor 2-alpha kinase 4</fullName>
        <ecNumber evidence="9 10 19">2.7.11.1</ecNumber>
    </alternativeName>
    <alternativeName>
        <fullName>GCN2-like protein</fullName>
        <shortName>mGCN2</shortName>
    </alternativeName>
</protein>
<evidence type="ECO:0000250" key="1"/>
<evidence type="ECO:0000250" key="2">
    <source>
        <dbReference type="UniProtKB" id="P15442"/>
    </source>
</evidence>
<evidence type="ECO:0000250" key="3">
    <source>
        <dbReference type="UniProtKB" id="Q9P2K8"/>
    </source>
</evidence>
<evidence type="ECO:0000255" key="4"/>
<evidence type="ECO:0000255" key="5">
    <source>
        <dbReference type="PROSITE-ProRule" id="PRU00159"/>
    </source>
</evidence>
<evidence type="ECO:0000255" key="6">
    <source>
        <dbReference type="PROSITE-ProRule" id="PRU00179"/>
    </source>
</evidence>
<evidence type="ECO:0000255" key="7">
    <source>
        <dbReference type="PROSITE-ProRule" id="PRU10027"/>
    </source>
</evidence>
<evidence type="ECO:0000256" key="8">
    <source>
        <dbReference type="SAM" id="MobiDB-lite"/>
    </source>
</evidence>
<evidence type="ECO:0000269" key="9">
    <source>
    </source>
</evidence>
<evidence type="ECO:0000269" key="10">
    <source>
    </source>
</evidence>
<evidence type="ECO:0000269" key="11">
    <source>
    </source>
</evidence>
<evidence type="ECO:0000269" key="12">
    <source>
    </source>
</evidence>
<evidence type="ECO:0000269" key="13">
    <source>
    </source>
</evidence>
<evidence type="ECO:0000269" key="14">
    <source>
    </source>
</evidence>
<evidence type="ECO:0000269" key="15">
    <source>
    </source>
</evidence>
<evidence type="ECO:0000269" key="16">
    <source>
    </source>
</evidence>
<evidence type="ECO:0000269" key="17">
    <source>
    </source>
</evidence>
<evidence type="ECO:0000269" key="18">
    <source>
    </source>
</evidence>
<evidence type="ECO:0000269" key="19">
    <source>
    </source>
</evidence>
<evidence type="ECO:0000269" key="20">
    <source>
    </source>
</evidence>
<evidence type="ECO:0000269" key="21">
    <source>
    </source>
</evidence>
<evidence type="ECO:0000269" key="22">
    <source>
    </source>
</evidence>
<evidence type="ECO:0000269" key="23">
    <source>
    </source>
</evidence>
<evidence type="ECO:0000269" key="24">
    <source>
    </source>
</evidence>
<evidence type="ECO:0000269" key="25">
    <source>
    </source>
</evidence>
<evidence type="ECO:0000269" key="26">
    <source>
    </source>
</evidence>
<evidence type="ECO:0000303" key="27">
    <source>
    </source>
</evidence>
<evidence type="ECO:0000303" key="28">
    <source>
    </source>
</evidence>
<evidence type="ECO:0000303" key="29">
    <source>
    </source>
</evidence>
<evidence type="ECO:0000305" key="30"/>
<evidence type="ECO:0000305" key="31">
    <source>
    </source>
</evidence>
<evidence type="ECO:0000312" key="32">
    <source>
        <dbReference type="MGI" id="MGI:1353427"/>
    </source>
</evidence>
<evidence type="ECO:0007829" key="33">
    <source>
        <dbReference type="PDB" id="1UKX"/>
    </source>
</evidence>
<evidence type="ECO:0007829" key="34">
    <source>
        <dbReference type="PDB" id="4OTN"/>
    </source>
</evidence>
<accession>Q9QZ05</accession>
<accession>A2AUM3</accession>
<accession>A2AUM4</accession>
<accession>Q6GQT4</accession>
<accession>Q6ZPT5</accession>
<accession>Q8C5S0</accession>
<accession>Q8CIF5</accession>
<accession>Q9CT30</accession>
<accession>Q9CUV9</accession>
<accession>Q9ESB6</accession>
<accession>Q9ESB7</accession>
<accession>Q9ESB8</accession>
<name>E2AK4_MOUSE</name>
<sequence>MAGGRGASGRGRAEPQESYSQRQDHELQALEAIYGSDFQDLRPDARGRVREPPEINLVLYPQGLAGEEVYVQVELQVKCPPTYPDVVPEIELKNAKGLSNESVNLLKSHLEELAKKQCGEVMIFELAHHVQSFLSEHNKPPPKSFHEEMLERQAQEKQQRLLEARRKEEQEQREILHEIQRRKEEIKEEKKRKEMAKQERLEITSLTNQDYASKRDPAGHRAAAILHGGSPDFVGNGKARTYSSGRSRRERQYSVCSGEPSPGSCDILHFSVGSPDQLMVHKGRCVGSDEQLGKVVYNALETATGSFVLLHEWVLQWQKMGPCLTSQEKEKIDKCKRQIQGAETEFSSLVKLSHPNIVRYFAMNSREEEDSIVIDILAEHVSGISLATHLSHSGPVPAHQLRKYTAQLLAGLDYLHSNSVVHKVLSASSVLVDAEGTVKITDYSISKRLADICKEDVFEQARVRFSDSALPYKTGKKGDVWRLGLLLLSLSQGQECGEYPVTIPSDLPADFQDFLKKCVCLDDKERWSPQQLLKHSFINPQPKLPLVEQSPEDSGGQDYIETVIPSNQLPSAAFFSETQKQFSRYFIEFEELQLLGKGAFGAVIKVQNKLDGCCYAVKRIPINPASRHFRRIKGEVTLLSRLHHENIVRYYNAWIERHERPAVPGTPPPDCTPQAQDSPATCGKTSGDTEELGSVEAAAPPPILSSSVEWSTSAERSTSTRFPVTGQDSSSDEEDEDERDGVFSQSFLPASDSDSDIIFDNEDENSKSQNQDEDCNQKDGSHEIEPSVTAEAVHYLYIQMEYCEKSTLRDTIDQGLFRDTSRLWRLFREILDGLAYIHEKGMIHRDLKPVNIFLDSDDHVKIGDFGLATDHLAFTAEGKQDDQAGDGVIKSDPSGHLTGMVGTALYVSPEVQGSTKSAYNQKVDLFSLGIIFFEMSYHPMVTASERIFVLNQLRDPTSPKFPDDFDDGEHTKQKSVISWLLNHDPAKRPTAMELLKSELLPPPQMEESELHEVLHHTLANIDGKAYRTMMSQIFCQHISPAIDYTYDSDILKGNFLIRTAKIQQLVCETIVRVFKRHGAVQLCTPLLLPRNRQIYEHNEAALFMDHSGMLVMLPFDLRVPFARYVARNNILNLKRYCIERVFRPRKLDRFHPKELLECAFDIVTSTTNSSLPTAETIYTIYEIIQEFPALQERNYSIYLNHTMLLKAILLHCGIPEDKLSQVYVILYDAVTEKLTRREVEAKFCNLSLSSNSLCRLYKFIEQKGDLQDLTPTINSLIKQKTGVAQLVKYSLKDLEDVVGLLKKLGVKLQVSINLGLVYKVQQHTGIIFQFLAFSKRRQRVVPEILAAGGRYDLLIPKFRGPQTVGPVPTAVGVSIAIDKIFAAVLNMEEPVTVSSCDLLVVSVGQMSMSRAINLTQKLWTAGITAEIMYDWSQSQEELQEYCRHHEITYVALVSDKEGSHVKVKSFEKERQTEKRVLESDLVDHVMQKLRTKVGDERNFRDASDNLAVQTLKGSFSNASGLFEIHGTTVVPNVIVLAPEKLSASTRRRHEIQVQTRLQTTLANLHQKSSEIEILAVDLPKETILQFLSLEWDADEQAFNTTVKQLLSRLPKQRYLKLVCDEIYNIKVEKKVSVLFLYSYRDDYYRILF</sequence>
<feature type="chain" id="PRO_0000085948" description="eIF-2-alpha kinase GCN2">
    <location>
        <begin position="1"/>
        <end position="1648"/>
    </location>
</feature>
<feature type="domain" description="RWD" evidence="6">
    <location>
        <begin position="25"/>
        <end position="137"/>
    </location>
</feature>
<feature type="domain" description="Protein kinase 1" evidence="5">
    <location>
        <begin position="286"/>
        <end position="538"/>
    </location>
</feature>
<feature type="domain" description="Protein kinase 2" evidence="5">
    <location>
        <begin position="589"/>
        <end position="1000"/>
    </location>
</feature>
<feature type="region of interest" description="Disordered" evidence="8">
    <location>
        <begin position="1"/>
        <end position="26"/>
    </location>
</feature>
<feature type="region of interest" description="Disordered" evidence="8">
    <location>
        <begin position="661"/>
        <end position="784"/>
    </location>
</feature>
<feature type="region of interest" description="Histidyl-tRNA synthetase-like">
    <location>
        <begin position="1021"/>
        <end position="1492"/>
    </location>
</feature>
<feature type="coiled-coil region" evidence="4">
    <location>
        <begin position="146"/>
        <end position="205"/>
    </location>
</feature>
<feature type="compositionally biased region" description="Polar residues" evidence="8">
    <location>
        <begin position="673"/>
        <end position="686"/>
    </location>
</feature>
<feature type="compositionally biased region" description="Polar residues" evidence="8">
    <location>
        <begin position="704"/>
        <end position="722"/>
    </location>
</feature>
<feature type="compositionally biased region" description="Acidic residues" evidence="8">
    <location>
        <begin position="730"/>
        <end position="739"/>
    </location>
</feature>
<feature type="compositionally biased region" description="Acidic residues" evidence="8">
    <location>
        <begin position="753"/>
        <end position="763"/>
    </location>
</feature>
<feature type="compositionally biased region" description="Basic and acidic residues" evidence="8">
    <location>
        <begin position="775"/>
        <end position="784"/>
    </location>
</feature>
<feature type="active site" description="Proton acceptor" evidence="5 7">
    <location>
        <position position="846"/>
    </location>
</feature>
<feature type="binding site" evidence="5">
    <location>
        <begin position="595"/>
        <end position="603"/>
    </location>
    <ligand>
        <name>ATP</name>
        <dbReference type="ChEBI" id="CHEBI:30616"/>
    </ligand>
</feature>
<feature type="binding site" evidence="5">
    <location>
        <position position="618"/>
    </location>
    <ligand>
        <name>ATP</name>
        <dbReference type="ChEBI" id="CHEBI:30616"/>
    </ligand>
</feature>
<feature type="modified residue" description="Phosphoserine" evidence="3">
    <location>
        <position position="230"/>
    </location>
</feature>
<feature type="modified residue" description="Phosphothreonine" evidence="3">
    <location>
        <position position="666"/>
    </location>
</feature>
<feature type="modified residue" description="Phosphothreonine" evidence="3">
    <location>
        <position position="869"/>
    </location>
</feature>
<feature type="modified residue" description="Phosphothreonine; by autocatalysis" evidence="12 24">
    <location>
        <position position="898"/>
    </location>
</feature>
<feature type="modified residue" description="Phosphothreonine; by autocatalysis" evidence="1">
    <location>
        <position position="903"/>
    </location>
</feature>
<feature type="modified residue" description="N6-acetyllysine" evidence="3">
    <location>
        <position position="1258"/>
    </location>
</feature>
<feature type="splice variant" id="VSP_013039" description="In isoform 5." evidence="29">
    <location>
        <begin position="1"/>
        <end position="801"/>
    </location>
</feature>
<feature type="splice variant" id="VSP_013040" description="In isoform 4." evidence="27">
    <location>
        <begin position="1"/>
        <end position="278"/>
    </location>
</feature>
<feature type="splice variant" id="VSP_013041" description="In isoform 6." evidence="28">
    <location>
        <begin position="1"/>
        <end position="121"/>
    </location>
</feature>
<feature type="splice variant" id="VSP_013042" description="In isoform 2." evidence="28">
    <location>
        <begin position="1"/>
        <end position="112"/>
    </location>
</feature>
<feature type="splice variant" id="VSP_013043" description="In isoform 3." evidence="27">
    <location>
        <begin position="1"/>
        <end position="78"/>
    </location>
</feature>
<feature type="splice variant" id="VSP_013044" description="In isoform 3." evidence="27">
    <original>CPPTYPDV</original>
    <variation>MRTQRALL</variation>
    <location>
        <begin position="79"/>
        <end position="86"/>
    </location>
</feature>
<feature type="splice variant" id="VSP_013045" description="In isoform 2." evidence="28">
    <original>LAKKQCGE</original>
    <variation>MPTYIPRC</variation>
    <location>
        <begin position="113"/>
        <end position="120"/>
    </location>
</feature>
<feature type="splice variant" id="VSP_013046" description="In isoform 6." evidence="28">
    <original>QNKLDGCCYAVKRIPINPASRHFRRIKGEVTLLSRLHHENIVRYYNA</original>
    <variation>RQGCPQSLLSFLFPFHGLTGLVSILGVEREVNKIRLFEAGSTFTSRS</variation>
    <location>
        <begin position="607"/>
        <end position="653"/>
    </location>
</feature>
<feature type="splice variant" id="VSP_013047" description="In isoform 6." evidence="28">
    <location>
        <begin position="654"/>
        <end position="1648"/>
    </location>
</feature>
<feature type="splice variant" id="VSP_013048" description="In isoform 5." evidence="29">
    <original>YCEKSTLRDTIDQGLFRDTSRLWRLFREILDGLAYIHEK</original>
    <variation>MGEDSSSGHHNPLPLKSGNRVLSSVWEEAVDGLFIVFQQ</variation>
    <location>
        <begin position="802"/>
        <end position="840"/>
    </location>
</feature>
<feature type="splice variant" id="VSP_013049" description="In isoform 5." evidence="29">
    <original>PFARYVARNNILNLKRYCIERVFRPRKLD</original>
    <variation>SWDAAPLKTRPSQTPPLQPYPGEPHVGNT</variation>
    <location>
        <begin position="1120"/>
        <end position="1148"/>
    </location>
</feature>
<feature type="splice variant" id="VSP_013050" description="In isoform 5." evidence="29">
    <location>
        <begin position="1149"/>
        <end position="1648"/>
    </location>
</feature>
<feature type="mutagenesis site" description="Inhibits autophosphorylation, eIF-2-alpha phosphorylation and antiviral activity against Sindbis virus." evidence="19">
    <original>K</original>
    <variation>R</variation>
    <location>
        <position position="618"/>
    </location>
</feature>
<feature type="mutagenesis site" description="Decreases autophosphorylation, binding to tRNA and Sindbis virus genomic RNA and eIF-2-alpha phosphorylation in amino acid-starved cells; when associated with I-1143." evidence="19">
    <original>F</original>
    <variation>L</variation>
    <location>
        <position position="1142"/>
    </location>
</feature>
<feature type="mutagenesis site" description="Decreases autophosphorylation, binding to tRNA and Sindbis virus genomic RNA and eIF-2-alpha phosphorylation in amino acid-starved cells; when associated with L-1142." evidence="19">
    <original>R</original>
    <variation>I</variation>
    <location>
        <position position="1143"/>
    </location>
</feature>
<feature type="sequence conflict" description="In Ref. 3; BAB28984." evidence="30" ref="3">
    <original>Q</original>
    <variation>R</variation>
    <location>
        <position position="76"/>
    </location>
</feature>
<feature type="sequence conflict" description="In Ref. 3; BAB28984." evidence="30" ref="3">
    <original>E</original>
    <variation>D</variation>
    <location>
        <position position="91"/>
    </location>
</feature>
<feature type="sequence conflict" description="In Ref. 3 and 5; AAH23958." evidence="30" ref="3 5">
    <original>P</original>
    <variation>L</variation>
    <location>
        <position position="262"/>
    </location>
</feature>
<feature type="sequence conflict" description="In Ref. 6; BAC98144." evidence="30" ref="6">
    <original>KCVCLDDKERWSPQQLLKHSFIN</original>
    <variation>NPRRPKRRPQETSQEVWFC</variation>
    <location>
        <begin position="517"/>
        <end position="539"/>
    </location>
</feature>
<feature type="sequence conflict" description="In Ref. 2; AAG22589/AAG22590/AAG22591 and 6; BAC98144." evidence="30" ref="2 6">
    <original>C</original>
    <variation>Y</variation>
    <location>
        <position position="682"/>
    </location>
</feature>
<feature type="sequence conflict" description="In Ref. 3." evidence="30" ref="3">
    <original>TGQ</original>
    <variation>MGE</variation>
    <location>
        <begin position="725"/>
        <end position="727"/>
    </location>
</feature>
<feature type="sequence conflict" description="In Ref. 2; AAG22589/AAG22590/AAG22591 and 6; BAC98144." evidence="30" ref="2 6">
    <original>I</original>
    <variation>V</variation>
    <location>
        <position position="784"/>
    </location>
</feature>
<feature type="sequence conflict" description="In Ref. 5; AAH72637." evidence="30" ref="5">
    <original>F</original>
    <variation>I</variation>
    <location>
        <position position="853"/>
    </location>
</feature>
<feature type="sequence conflict" description="In Ref. 2; AAG22589/AAG22590/AAG22591." evidence="30" ref="2">
    <original>D</original>
    <variation>G</variation>
    <location>
        <position position="882"/>
    </location>
</feature>
<feature type="sequence conflict" description="In Ref. 2; AAG22589/AAG22590/AAG22591 and 6; BAC98144." evidence="30" ref="2 6">
    <original>G</original>
    <variation>R</variation>
    <location>
        <position position="887"/>
    </location>
</feature>
<feature type="sequence conflict" description="In Ref. 6; BAC98144." evidence="30" ref="6">
    <original>G</original>
    <variation>C</variation>
    <location>
        <position position="895"/>
    </location>
</feature>
<feature type="sequence conflict" description="In Ref. 2; AAG22589/AAG22590/AAG22591." evidence="30" ref="2">
    <original>I</original>
    <variation>T</variation>
    <location>
        <position position="1021"/>
    </location>
</feature>
<feature type="sequence conflict" description="In Ref. 2; AAG22589/AAG22590/AAG22591." evidence="30" ref="2">
    <original>I</original>
    <variation>L</variation>
    <location>
        <position position="1033"/>
    </location>
</feature>
<feature type="sequence conflict" description="In Ref. 2; AAG22589/AAG22590/AAG22591." evidence="30" ref="2">
    <original>I</original>
    <variation>S</variation>
    <location>
        <position position="1038"/>
    </location>
</feature>
<feature type="sequence conflict" description="In Ref. 2; AAG22589/AAG22590/AAG22591." evidence="30" ref="2">
    <original>T</original>
    <variation>A</variation>
    <location>
        <position position="1167"/>
    </location>
</feature>
<feature type="sequence conflict" description="In Ref. 2; AAG22589/AAG22590/AAG22591." evidence="30" ref="2">
    <original>I</original>
    <variation>V</variation>
    <location>
        <position position="1183"/>
    </location>
</feature>
<feature type="sequence conflict" description="In Ref. 3; BAB27580." evidence="30" ref="3">
    <original>S</original>
    <variation>A</variation>
    <location>
        <position position="1275"/>
    </location>
</feature>
<feature type="sequence conflict" description="In Ref. 2; AAG22589/AAG22590/AAG22591." evidence="30" ref="2">
    <original>V</original>
    <variation>I</variation>
    <location>
        <position position="1283"/>
    </location>
</feature>
<feature type="sequence conflict" description="In Ref. 2; AAG22589/AAG22590/AAG22591." evidence="30" ref="2">
    <original>D</original>
    <variation>E</variation>
    <location>
        <position position="1296"/>
    </location>
</feature>
<feature type="sequence conflict" description="In Ref. 2; AAG22589/AAG22590/AAG22591." evidence="30" ref="2">
    <original>T</original>
    <variation>N</variation>
    <location>
        <position position="1324"/>
    </location>
</feature>
<feature type="sequence conflict" description="In Ref. 2; AAG22589/AAG22590." evidence="30" ref="2">
    <original>TV</original>
    <variation>AL</variation>
    <location>
        <begin position="1363"/>
        <end position="1364"/>
    </location>
</feature>
<feature type="sequence conflict" description="In Ref. 1; CAB58363 and 6; BAC98144." evidence="30" ref="1 6">
    <original>A</original>
    <variation>V</variation>
    <location>
        <position position="1383"/>
    </location>
</feature>
<feature type="sequence conflict" description="In Ref. 2; AAG22589/AAG22590/AAG22591." evidence="30" ref="2">
    <original>E</original>
    <variation>G</variation>
    <location>
        <position position="1388"/>
    </location>
</feature>
<feature type="sequence conflict" description="In Ref. 2; AAG22589/AAG22590/AAG22591." evidence="30" ref="2">
    <original>V</original>
    <variation>A</variation>
    <location>
        <position position="1403"/>
    </location>
</feature>
<feature type="sequence conflict" description="In Ref. 3; BAB27580." evidence="30" ref="3">
    <original>E</original>
    <variation>G</variation>
    <location>
        <position position="1467"/>
    </location>
</feature>
<feature type="sequence conflict" description="In Ref. 2; AAG22589/AAG22590." evidence="30" ref="2">
    <original>NVIVLA</original>
    <variation>TVSVIS</variation>
    <location>
        <begin position="1532"/>
        <end position="1537"/>
    </location>
</feature>
<feature type="sequence conflict" description="In Ref. 3; BAB27580." evidence="30" ref="3">
    <original>K</original>
    <variation>M</variation>
    <location>
        <position position="1540"/>
    </location>
</feature>
<feature type="helix" evidence="33">
    <location>
        <begin position="19"/>
        <end position="33"/>
    </location>
</feature>
<feature type="strand" evidence="33">
    <location>
        <begin position="35"/>
        <end position="40"/>
    </location>
</feature>
<feature type="strand" evidence="33">
    <location>
        <begin position="46"/>
        <end position="48"/>
    </location>
</feature>
<feature type="strand" evidence="33">
    <location>
        <begin position="55"/>
        <end position="59"/>
    </location>
</feature>
<feature type="strand" evidence="33">
    <location>
        <begin position="66"/>
        <end position="68"/>
    </location>
</feature>
<feature type="strand" evidence="33">
    <location>
        <begin position="72"/>
        <end position="77"/>
    </location>
</feature>
<feature type="turn" evidence="33">
    <location>
        <begin position="81"/>
        <end position="84"/>
    </location>
</feature>
<feature type="strand" evidence="33">
    <location>
        <begin position="91"/>
        <end position="101"/>
    </location>
</feature>
<feature type="helix" evidence="33">
    <location>
        <begin position="102"/>
        <end position="117"/>
    </location>
</feature>
<feature type="helix" evidence="33">
    <location>
        <begin position="123"/>
        <end position="137"/>
    </location>
</feature>
<feature type="strand" evidence="34">
    <location>
        <begin position="1532"/>
        <end position="1536"/>
    </location>
</feature>
<feature type="helix" evidence="34">
    <location>
        <begin position="1543"/>
        <end position="1556"/>
    </location>
</feature>
<feature type="helix" evidence="34">
    <location>
        <begin position="1558"/>
        <end position="1562"/>
    </location>
</feature>
<feature type="helix" evidence="34">
    <location>
        <begin position="1563"/>
        <end position="1565"/>
    </location>
</feature>
<feature type="strand" evidence="34">
    <location>
        <begin position="1566"/>
        <end position="1577"/>
    </location>
</feature>
<feature type="helix" evidence="34">
    <location>
        <begin position="1580"/>
        <end position="1586"/>
    </location>
</feature>
<feature type="helix" evidence="34">
    <location>
        <begin position="1595"/>
        <end position="1607"/>
    </location>
</feature>
<feature type="helix" evidence="34">
    <location>
        <begin position="1613"/>
        <end position="1626"/>
    </location>
</feature>
<feature type="strand" evidence="34">
    <location>
        <begin position="1631"/>
        <end position="1638"/>
    </location>
</feature>
<feature type="turn" evidence="34">
    <location>
        <begin position="1639"/>
        <end position="1642"/>
    </location>
</feature>
<feature type="strand" evidence="34">
    <location>
        <begin position="1643"/>
        <end position="1647"/>
    </location>
</feature>
<gene>
    <name evidence="32" type="primary">Eif2ak4</name>
    <name type="synonym">Gcn2</name>
    <name type="synonym">Kiaa1338</name>
</gene>
<reference key="1">
    <citation type="journal article" date="1999" name="Eur. J. Biochem.">
        <title>Characterization of a mammalian homolog of the GCN2 eukaryotic initiation factor 2alpha kinase.</title>
        <authorList>
            <person name="Berlanga J.J."/>
            <person name="Santoyo J."/>
            <person name="de Haro C."/>
        </authorList>
    </citation>
    <scope>NUCLEOTIDE SEQUENCE [MRNA] (ISOFORM 1)</scope>
    <scope>FUNCTION</scope>
    <scope>CATALYTIC ACTIVITY</scope>
    <scope>ACTIVITY REGULATION</scope>
    <scope>AUTOPHOSPHORYLATION</scope>
    <scope>DOMAIN</scope>
    <scope>TISSUE SPECIFICITY</scope>
    <source>
        <strain>BALB/cJ</strain>
    </source>
</reference>
<reference key="2">
    <citation type="journal article" date="2000" name="Genetics">
        <title>A mammalian homologue of GCN2 protein kinase important for translational control by phosphorylation of eukaryotic initiation factor-2alpha.</title>
        <authorList>
            <person name="Sood R."/>
            <person name="Porter A.C."/>
            <person name="Olsen D.A."/>
            <person name="Cavener D.R."/>
            <person name="Wek R.C."/>
        </authorList>
    </citation>
    <scope>NUCLEOTIDE SEQUENCE [MRNA] (ISOFORMS 1; 3 AND 4)</scope>
    <scope>FUNCTION</scope>
    <scope>CATALYTIC ACTIVITY</scope>
    <scope>AUTOPHOSPHORYLATION</scope>
    <scope>DOMAIN</scope>
    <scope>TISSUE SPECIFICITY</scope>
    <source>
        <strain>BALB/cJ</strain>
    </source>
</reference>
<reference key="3">
    <citation type="journal article" date="2005" name="Science">
        <title>The transcriptional landscape of the mammalian genome.</title>
        <authorList>
            <person name="Carninci P."/>
            <person name="Kasukawa T."/>
            <person name="Katayama S."/>
            <person name="Gough J."/>
            <person name="Frith M.C."/>
            <person name="Maeda N."/>
            <person name="Oyama R."/>
            <person name="Ravasi T."/>
            <person name="Lenhard B."/>
            <person name="Wells C."/>
            <person name="Kodzius R."/>
            <person name="Shimokawa K."/>
            <person name="Bajic V.B."/>
            <person name="Brenner S.E."/>
            <person name="Batalov S."/>
            <person name="Forrest A.R."/>
            <person name="Zavolan M."/>
            <person name="Davis M.J."/>
            <person name="Wilming L.G."/>
            <person name="Aidinis V."/>
            <person name="Allen J.E."/>
            <person name="Ambesi-Impiombato A."/>
            <person name="Apweiler R."/>
            <person name="Aturaliya R.N."/>
            <person name="Bailey T.L."/>
            <person name="Bansal M."/>
            <person name="Baxter L."/>
            <person name="Beisel K.W."/>
            <person name="Bersano T."/>
            <person name="Bono H."/>
            <person name="Chalk A.M."/>
            <person name="Chiu K.P."/>
            <person name="Choudhary V."/>
            <person name="Christoffels A."/>
            <person name="Clutterbuck D.R."/>
            <person name="Crowe M.L."/>
            <person name="Dalla E."/>
            <person name="Dalrymple B.P."/>
            <person name="de Bono B."/>
            <person name="Della Gatta G."/>
            <person name="di Bernardo D."/>
            <person name="Down T."/>
            <person name="Engstrom P."/>
            <person name="Fagiolini M."/>
            <person name="Faulkner G."/>
            <person name="Fletcher C.F."/>
            <person name="Fukushima T."/>
            <person name="Furuno M."/>
            <person name="Futaki S."/>
            <person name="Gariboldi M."/>
            <person name="Georgii-Hemming P."/>
            <person name="Gingeras T.R."/>
            <person name="Gojobori T."/>
            <person name="Green R.E."/>
            <person name="Gustincich S."/>
            <person name="Harbers M."/>
            <person name="Hayashi Y."/>
            <person name="Hensch T.K."/>
            <person name="Hirokawa N."/>
            <person name="Hill D."/>
            <person name="Huminiecki L."/>
            <person name="Iacono M."/>
            <person name="Ikeo K."/>
            <person name="Iwama A."/>
            <person name="Ishikawa T."/>
            <person name="Jakt M."/>
            <person name="Kanapin A."/>
            <person name="Katoh M."/>
            <person name="Kawasawa Y."/>
            <person name="Kelso J."/>
            <person name="Kitamura H."/>
            <person name="Kitano H."/>
            <person name="Kollias G."/>
            <person name="Krishnan S.P."/>
            <person name="Kruger A."/>
            <person name="Kummerfeld S.K."/>
            <person name="Kurochkin I.V."/>
            <person name="Lareau L.F."/>
            <person name="Lazarevic D."/>
            <person name="Lipovich L."/>
            <person name="Liu J."/>
            <person name="Liuni S."/>
            <person name="McWilliam S."/>
            <person name="Madan Babu M."/>
            <person name="Madera M."/>
            <person name="Marchionni L."/>
            <person name="Matsuda H."/>
            <person name="Matsuzawa S."/>
            <person name="Miki H."/>
            <person name="Mignone F."/>
            <person name="Miyake S."/>
            <person name="Morris K."/>
            <person name="Mottagui-Tabar S."/>
            <person name="Mulder N."/>
            <person name="Nakano N."/>
            <person name="Nakauchi H."/>
            <person name="Ng P."/>
            <person name="Nilsson R."/>
            <person name="Nishiguchi S."/>
            <person name="Nishikawa S."/>
            <person name="Nori F."/>
            <person name="Ohara O."/>
            <person name="Okazaki Y."/>
            <person name="Orlando V."/>
            <person name="Pang K.C."/>
            <person name="Pavan W.J."/>
            <person name="Pavesi G."/>
            <person name="Pesole G."/>
            <person name="Petrovsky N."/>
            <person name="Piazza S."/>
            <person name="Reed J."/>
            <person name="Reid J.F."/>
            <person name="Ring B.Z."/>
            <person name="Ringwald M."/>
            <person name="Rost B."/>
            <person name="Ruan Y."/>
            <person name="Salzberg S.L."/>
            <person name="Sandelin A."/>
            <person name="Schneider C."/>
            <person name="Schoenbach C."/>
            <person name="Sekiguchi K."/>
            <person name="Semple C.A."/>
            <person name="Seno S."/>
            <person name="Sessa L."/>
            <person name="Sheng Y."/>
            <person name="Shibata Y."/>
            <person name="Shimada H."/>
            <person name="Shimada K."/>
            <person name="Silva D."/>
            <person name="Sinclair B."/>
            <person name="Sperling S."/>
            <person name="Stupka E."/>
            <person name="Sugiura K."/>
            <person name="Sultana R."/>
            <person name="Takenaka Y."/>
            <person name="Taki K."/>
            <person name="Tammoja K."/>
            <person name="Tan S.L."/>
            <person name="Tang S."/>
            <person name="Taylor M.S."/>
            <person name="Tegner J."/>
            <person name="Teichmann S.A."/>
            <person name="Ueda H.R."/>
            <person name="van Nimwegen E."/>
            <person name="Verardo R."/>
            <person name="Wei C.L."/>
            <person name="Yagi K."/>
            <person name="Yamanishi H."/>
            <person name="Zabarovsky E."/>
            <person name="Zhu S."/>
            <person name="Zimmer A."/>
            <person name="Hide W."/>
            <person name="Bult C."/>
            <person name="Grimmond S.M."/>
            <person name="Teasdale R.D."/>
            <person name="Liu E.T."/>
            <person name="Brusic V."/>
            <person name="Quackenbush J."/>
            <person name="Wahlestedt C."/>
            <person name="Mattick J.S."/>
            <person name="Hume D.A."/>
            <person name="Kai C."/>
            <person name="Sasaki D."/>
            <person name="Tomaru Y."/>
            <person name="Fukuda S."/>
            <person name="Kanamori-Katayama M."/>
            <person name="Suzuki M."/>
            <person name="Aoki J."/>
            <person name="Arakawa T."/>
            <person name="Iida J."/>
            <person name="Imamura K."/>
            <person name="Itoh M."/>
            <person name="Kato T."/>
            <person name="Kawaji H."/>
            <person name="Kawagashira N."/>
            <person name="Kawashima T."/>
            <person name="Kojima M."/>
            <person name="Kondo S."/>
            <person name="Konno H."/>
            <person name="Nakano K."/>
            <person name="Ninomiya N."/>
            <person name="Nishio T."/>
            <person name="Okada M."/>
            <person name="Plessy C."/>
            <person name="Shibata K."/>
            <person name="Shiraki T."/>
            <person name="Suzuki S."/>
            <person name="Tagami M."/>
            <person name="Waki K."/>
            <person name="Watahiki A."/>
            <person name="Okamura-Oho Y."/>
            <person name="Suzuki H."/>
            <person name="Kawai J."/>
            <person name="Hayashizaki Y."/>
        </authorList>
    </citation>
    <scope>NUCLEOTIDE SEQUENCE [LARGE SCALE MRNA] (ISOFORM 5)</scope>
    <source>
        <strain>C57BL/6J</strain>
        <tissue>Testis</tissue>
    </source>
</reference>
<reference key="4">
    <citation type="journal article" date="2009" name="PLoS Biol.">
        <title>Lineage-specific biology revealed by a finished genome assembly of the mouse.</title>
        <authorList>
            <person name="Church D.M."/>
            <person name="Goodstadt L."/>
            <person name="Hillier L.W."/>
            <person name="Zody M.C."/>
            <person name="Goldstein S."/>
            <person name="She X."/>
            <person name="Bult C.J."/>
            <person name="Agarwala R."/>
            <person name="Cherry J.L."/>
            <person name="DiCuccio M."/>
            <person name="Hlavina W."/>
            <person name="Kapustin Y."/>
            <person name="Meric P."/>
            <person name="Maglott D."/>
            <person name="Birtle Z."/>
            <person name="Marques A.C."/>
            <person name="Graves T."/>
            <person name="Zhou S."/>
            <person name="Teague B."/>
            <person name="Potamousis K."/>
            <person name="Churas C."/>
            <person name="Place M."/>
            <person name="Herschleb J."/>
            <person name="Runnheim R."/>
            <person name="Forrest D."/>
            <person name="Amos-Landgraf J."/>
            <person name="Schwartz D.C."/>
            <person name="Cheng Z."/>
            <person name="Lindblad-Toh K."/>
            <person name="Eichler E.E."/>
            <person name="Ponting C.P."/>
        </authorList>
    </citation>
    <scope>NUCLEOTIDE SEQUENCE [LARGE SCALE GENOMIC DNA]</scope>
    <source>
        <strain>C57BL/6J</strain>
    </source>
</reference>
<reference key="5">
    <citation type="journal article" date="2004" name="Genome Res.">
        <title>The status, quality, and expansion of the NIH full-length cDNA project: the Mammalian Gene Collection (MGC).</title>
        <authorList>
            <consortium name="The MGC Project Team"/>
        </authorList>
    </citation>
    <scope>NUCLEOTIDE SEQUENCE [LARGE SCALE MRNA] (ISOFORMS 2 AND 6)</scope>
    <source>
        <strain>C57BL/6J</strain>
        <strain>FVB/N</strain>
        <tissue>Brain</tissue>
        <tissue>Mammary gland</tissue>
    </source>
</reference>
<reference key="6">
    <citation type="journal article" date="2003" name="DNA Res.">
        <title>Prediction of the coding sequences of mouse homologues of KIAA gene: III. The complete nucleotide sequences of 500 mouse KIAA-homologous cDNAs identified by screening of terminal sequences of cDNA clones randomly sampled from size-fractionated libraries.</title>
        <authorList>
            <person name="Okazaki N."/>
            <person name="Kikuno R."/>
            <person name="Ohara R."/>
            <person name="Inamoto S."/>
            <person name="Koseki H."/>
            <person name="Hiraoka S."/>
            <person name="Saga Y."/>
            <person name="Nagase T."/>
            <person name="Ohara O."/>
            <person name="Koga H."/>
        </authorList>
    </citation>
    <scope>NUCLEOTIDE SEQUENCE [LARGE SCALE MRNA] OF 248-1648</scope>
    <source>
        <tissue>Embryonic tail</tissue>
    </source>
</reference>
<reference key="7">
    <citation type="submission" date="2003-12" db="EMBL/GenBank/DDBJ databases">
        <authorList>
            <person name="Okazaki N."/>
            <person name="Kikuno R."/>
            <person name="Nagase T."/>
            <person name="Ohara O."/>
            <person name="Koga H."/>
        </authorList>
    </citation>
    <scope>SEQUENCE REVISION</scope>
</reference>
<reference key="8">
    <citation type="submission" date="2009-01" db="UniProtKB">
        <authorList>
            <person name="Lubec G."/>
            <person name="Sunyer B."/>
            <person name="Chen W.-Q."/>
        </authorList>
    </citation>
    <scope>PROTEIN SEQUENCE OF 1053-1061</scope>
    <scope>IDENTIFICATION BY MASS SPECTROMETRY</scope>
    <source>
        <strain>OF1</strain>
        <tissue>Hippocampus</tissue>
    </source>
</reference>
<reference key="9">
    <citation type="journal article" date="2000" name="Mol. Cell">
        <title>Regulated translation initiation controls stress-induced gene expression in mammalian cells.</title>
        <authorList>
            <person name="Harding H.P."/>
            <person name="Novoa I."/>
            <person name="Zhang Y."/>
            <person name="Zeng H."/>
            <person name="Wek R."/>
            <person name="Schapira M."/>
            <person name="Ron D."/>
        </authorList>
    </citation>
    <scope>FUNCTION</scope>
    <scope>AUTOPHOSPHORYLATION</scope>
</reference>
<reference key="10">
    <citation type="journal article" date="2002" name="Curr. Biol.">
        <title>Activation of GCN2 in UV-irradiated cells inhibits translation.</title>
        <authorList>
            <person name="Deng J."/>
            <person name="Harding H.P."/>
            <person name="Raught B."/>
            <person name="Gingras A.C."/>
            <person name="Berlanga J.J."/>
            <person name="Scheuner D."/>
            <person name="Kaufman R.J."/>
            <person name="Ron D."/>
            <person name="Sonenberg N."/>
        </authorList>
    </citation>
    <scope>FUNCTION</scope>
    <scope>PHOSPHORYLATION AT THR-898</scope>
</reference>
<reference key="11">
    <citation type="journal article" date="2002" name="Mol. Cell. Biol.">
        <title>The GCN2 eIF2alpha kinase is required for adaptation to amino acid deprivation in mice.</title>
        <authorList>
            <person name="Zhang P."/>
            <person name="McGrath B.C."/>
            <person name="Reinert J."/>
            <person name="Olsen D.S."/>
            <person name="Lei L."/>
            <person name="Gill S."/>
            <person name="Wek S.A."/>
            <person name="Vattem K.M."/>
            <person name="Wek R.C."/>
            <person name="Kimball S.R."/>
            <person name="Jefferson L.S."/>
            <person name="Cavener D.R."/>
        </authorList>
    </citation>
    <scope>FUNCTION</scope>
    <scope>DISRUPTION PHENOTYPE</scope>
    <scope>TISSUE SPECIFICITY</scope>
</reference>
<reference key="12">
    <citation type="journal article" date="2004" name="J. Biol. Chem.">
        <title>Preservation of liver protein synthesis during dietary leucine deprivation occurs at the expense of skeletal muscle mass in mice deleted for eIF2 kinase GCN2.</title>
        <authorList>
            <person name="Anthony T.G."/>
            <person name="McDaniel B.J."/>
            <person name="Byerley R.L."/>
            <person name="McGrath B.C."/>
            <person name="Cavener D.R."/>
            <person name="McNurlan M.A."/>
            <person name="Wek R.C."/>
        </authorList>
    </citation>
    <scope>FUNCTION</scope>
    <scope>DISRUPTION PHENOTYPE</scope>
</reference>
<reference key="13">
    <citation type="journal article" date="2005" name="Cell Metab.">
        <title>The GCN2 kinase biases feeding behavior to maintain amino acid homeostasis in omnivores.</title>
        <authorList>
            <person name="Maurin A.C."/>
            <person name="Jousse C."/>
            <person name="Averous J."/>
            <person name="Parry L."/>
            <person name="Bruhat A."/>
            <person name="Cherasse Y."/>
            <person name="Zeng H."/>
            <person name="Zhang Y."/>
            <person name="Harding H.P."/>
            <person name="Ron D."/>
            <person name="Fafournoux P."/>
        </authorList>
    </citation>
    <scope>FUNCTION</scope>
    <scope>DISRUPTION PHENOTYPE</scope>
    <scope>CONDITIONAL KNOCKOUT IN BRAIN</scope>
</reference>
<reference key="14">
    <citation type="journal article" date="2005" name="Mol. Biol. Cell">
        <title>PERK and GCN2 contribute to eIF2alpha phosphorylation and cell cycle arrest after activation of the unfolded protein response pathway.</title>
        <authorList>
            <person name="Hamanaka R.B."/>
            <person name="Bennett B.S."/>
            <person name="Cullinan S.B."/>
            <person name="Diehl J.A."/>
        </authorList>
    </citation>
    <scope>FUNCTION</scope>
</reference>
<reference key="15">
    <citation type="journal article" date="2005" name="Nature">
        <title>Translational control of hippocampal synaptic plasticity and memory by the eIF2alpha kinase GCN2.</title>
        <authorList>
            <person name="Costa-Mattioli M."/>
            <person name="Gobert D."/>
            <person name="Harding H."/>
            <person name="Herdy B."/>
            <person name="Azzi M."/>
            <person name="Bruno M."/>
            <person name="Bidinosti M."/>
            <person name="Ben Mamou C."/>
            <person name="Marcinkiewicz E."/>
            <person name="Yoshida M."/>
            <person name="Imataka H."/>
            <person name="Cuello A.C."/>
            <person name="Seidah N."/>
            <person name="Sossin W."/>
            <person name="Lacaille J.C."/>
            <person name="Ron D."/>
            <person name="Nader K."/>
            <person name="Sonenberg N."/>
        </authorList>
    </citation>
    <scope>FUNCTION</scope>
    <scope>DISRUPTION PHENOTYPE</scope>
    <scope>TISSUE SPECIFICITY</scope>
</reference>
<reference key="16">
    <citation type="journal article" date="2005" name="Science">
        <title>Uncharged tRNA and sensing of amino acid deficiency in mammalian piriform cortex.</title>
        <authorList>
            <person name="Hao S."/>
            <person name="Sharp J.W."/>
            <person name="Ross-Inta C.M."/>
            <person name="McDaniel B.J."/>
            <person name="Anthony T.G."/>
            <person name="Wek R.C."/>
            <person name="Cavener D.R."/>
            <person name="McGrath B.C."/>
            <person name="Rudell J.B."/>
            <person name="Koehnle T.J."/>
            <person name="Gietzen D.W."/>
        </authorList>
    </citation>
    <scope>FUNCTION</scope>
</reference>
<reference key="17">
    <citation type="journal article" date="2006" name="EMBO J.">
        <title>Antiviral effect of the mammalian translation initiation factor 2alpha kinase GCN2 against RNA viruses.</title>
        <authorList>
            <person name="Berlanga J.J."/>
            <person name="Ventoso I."/>
            <person name="Harding H.P."/>
            <person name="Deng J."/>
            <person name="Ron D."/>
            <person name="Sonenberg N."/>
            <person name="Carrasco L."/>
            <person name="de Haro C."/>
        </authorList>
    </citation>
    <scope>FUNCTION (MICROBIAL INFECTION)</scope>
    <scope>CATALYTIC ACTIVITY</scope>
    <scope>ACTIVITY REGULATION (MICROBIAL INFECTION)</scope>
    <scope>AUTOPHOSPHORYLATION</scope>
    <scope>DISRUPTION PHENOTYPE</scope>
    <scope>MUTAGENESIS OF LYS-618; PHE-1142 AND ARG-1143</scope>
</reference>
<reference key="18">
    <citation type="journal article" date="2009" name="Mol. Cell. Biol.">
        <title>Translational control of protein kinase Ceta by two upstream open reading frames.</title>
        <authorList>
            <person name="Raveh-Amit H."/>
            <person name="Maissel A."/>
            <person name="Poller J."/>
            <person name="Marom L."/>
            <person name="Elroy-Stein O."/>
            <person name="Shapira M."/>
            <person name="Livneh E."/>
        </authorList>
    </citation>
    <scope>FUNCTION</scope>
</reference>
<reference key="19">
    <citation type="journal article" date="2010" name="Cell">
        <title>A tissue-specific atlas of mouse protein phosphorylation and expression.</title>
        <authorList>
            <person name="Huttlin E.L."/>
            <person name="Jedrychowski M.P."/>
            <person name="Elias J.E."/>
            <person name="Goswami T."/>
            <person name="Rad R."/>
            <person name="Beausoleil S.A."/>
            <person name="Villen J."/>
            <person name="Haas W."/>
            <person name="Sowa M.E."/>
            <person name="Gygi S.P."/>
        </authorList>
    </citation>
    <scope>IDENTIFICATION BY MASS SPECTROMETRY [LARGE SCALE ANALYSIS]</scope>
    <source>
        <tissue>Lung</tissue>
        <tissue>Pancreas</tissue>
        <tissue>Spleen</tissue>
        <tissue>Testis</tissue>
    </source>
</reference>
<reference key="20">
    <citation type="journal article" date="2010" name="Mol. Biol. Cell">
        <title>Phosphorylation of eIF2alpha at serine 51 is an important determinant of cell survival and adaptation to glucose deficiency.</title>
        <authorList>
            <person name="Muaddi H."/>
            <person name="Majumder M."/>
            <person name="Peidis P."/>
            <person name="Papadakis A.I."/>
            <person name="Holcik M."/>
            <person name="Scheuner D."/>
            <person name="Kaufman R.J."/>
            <person name="Hatzoglou M."/>
            <person name="Koromilas A.E."/>
        </authorList>
    </citation>
    <scope>FUNCTION</scope>
</reference>
<reference key="21">
    <citation type="journal article" date="2013" name="J. Biol. Chem.">
        <title>IMPACT is a developmentally regulated protein in neurons that opposes the eukaryotic initiation factor 2alpha kinase GCN2 in the modulation of neurite outgrowth.</title>
        <authorList>
            <person name="Roffe M."/>
            <person name="Hajj G.N."/>
            <person name="Azevedo H.F."/>
            <person name="Alves V.S."/>
            <person name="Castilho B.A."/>
        </authorList>
    </citation>
    <scope>FUNCTION</scope>
    <scope>SUBCELLULAR LOCATION</scope>
</reference>
<reference key="22">
    <citation type="journal article" date="2014" name="Biochem. Biophys. Res. Commun.">
        <title>Evolutionarily conserved IMPACT impairs various stress responses that require GCN1 for activating the eIF2 kinase GCN2.</title>
        <authorList>
            <person name="Cambiaghi T.D."/>
            <person name="Pereira C.M."/>
            <person name="Shanmugam R."/>
            <person name="Bolech M."/>
            <person name="Wek R.C."/>
            <person name="Sattlegger E."/>
            <person name="Castilho B.A."/>
        </authorList>
    </citation>
    <scope>INTERACTION WITH GCN1</scope>
    <scope>PHOSPHORYLATION AT THR-898</scope>
</reference>
<reference key="23">
    <citation type="journal article" date="2014" name="Science">
        <title>Vaccine activation of the nutrient sensor GCN2 in dendritic cells enhances antigen presentation.</title>
        <authorList>
            <person name="Ravindran R."/>
            <person name="Khan N."/>
            <person name="Nakaya H.I."/>
            <person name="Li S."/>
            <person name="Loebbermann J."/>
            <person name="Maddur M.S."/>
            <person name="Park Y."/>
            <person name="Jones D.P."/>
            <person name="Chappert P."/>
            <person name="Davoust J."/>
            <person name="Weiss D.S."/>
            <person name="Virgin H.W."/>
            <person name="Ron D."/>
            <person name="Pulendran B."/>
        </authorList>
    </citation>
    <scope>FUNCTION (MICROBIAL INFECTION)</scope>
    <scope>DISRUPTION PHENOTYPE</scope>
</reference>
<reference key="24">
    <citation type="journal article" date="2015" name="Biochem. J.">
        <title>p58IPK is an inhibitor of the eIF2alpha kinase GCN2 and its localization and expression underpin protein synthesis and ER processing capacity.</title>
        <authorList>
            <person name="Roobol A."/>
            <person name="Roobol J."/>
            <person name="Bastide A."/>
            <person name="Knight J.R."/>
            <person name="Willis A.E."/>
            <person name="Smales C.M."/>
        </authorList>
    </citation>
    <scope>INTERACTION WITH DNAJC3</scope>
</reference>
<reference key="25">
    <citation type="journal article" date="2015" name="PLoS Genet.">
        <title>Translational Upregulation of an Individual p21Cip1 Transcript Variant by GCN2 Regulates Cell Proliferation and Survival under Nutrient Stress.</title>
        <authorList>
            <person name="Lehman S.L."/>
            <person name="Cerniglia G.J."/>
            <person name="Johannes G.J."/>
            <person name="Ye J."/>
            <person name="Ryeom S."/>
            <person name="Koumenis C."/>
        </authorList>
    </citation>
    <scope>FUNCTION</scope>
</reference>
<reference key="26">
    <citation type="journal article" date="2004" name="Protein Sci.">
        <title>Solution structure of the RWD domain of the mouse GCN2 protein.</title>
        <authorList>
            <person name="Nameki N."/>
            <person name="Yoneyama M."/>
            <person name="Koshiba S."/>
            <person name="Tochio N."/>
            <person name="Inoue M."/>
            <person name="Seki E."/>
            <person name="Matsuda T."/>
            <person name="Tomo Y."/>
            <person name="Harada T."/>
            <person name="Saito K."/>
            <person name="Kobayashi N."/>
            <person name="Yabuki T."/>
            <person name="Aoki M."/>
            <person name="Nunokawa E."/>
            <person name="Matsuda N."/>
            <person name="Sakagami N."/>
            <person name="Terada T."/>
            <person name="Shirouzu M."/>
            <person name="Yoshida M."/>
            <person name="Hirota H."/>
            <person name="Osanai T."/>
            <person name="Tanaka A."/>
            <person name="Arakawa T."/>
            <person name="Carninci P."/>
            <person name="Kawai J."/>
            <person name="Hayashizaki Y."/>
            <person name="Kinoshita K."/>
            <person name="Guntert P."/>
            <person name="Kigawa T."/>
            <person name="Yokoyama S."/>
        </authorList>
    </citation>
    <scope>STRUCTURE BY NMR OF 17-107</scope>
</reference>
<keyword id="KW-0002">3D-structure</keyword>
<keyword id="KW-0007">Acetylation</keyword>
<keyword id="KW-1072">Activation of host autophagy by virus</keyword>
<keyword id="KW-0010">Activator</keyword>
<keyword id="KW-1064">Adaptive immunity</keyword>
<keyword id="KW-0025">Alternative splicing</keyword>
<keyword id="KW-0051">Antiviral defense</keyword>
<keyword id="KW-0067">ATP-binding</keyword>
<keyword id="KW-0131">Cell cycle</keyword>
<keyword id="KW-0175">Coiled coil</keyword>
<keyword id="KW-0963">Cytoplasm</keyword>
<keyword id="KW-0221">Differentiation</keyword>
<keyword id="KW-0903">Direct protein sequencing</keyword>
<keyword id="KW-0338">Growth arrest</keyword>
<keyword id="KW-0945">Host-virus interaction</keyword>
<keyword id="KW-0391">Immunity</keyword>
<keyword id="KW-0418">Kinase</keyword>
<keyword id="KW-0524">Neurogenesis</keyword>
<keyword id="KW-0547">Nucleotide-binding</keyword>
<keyword id="KW-0597">Phosphoprotein</keyword>
<keyword id="KW-1185">Reference proteome</keyword>
<keyword id="KW-0677">Repeat</keyword>
<keyword id="KW-0694">RNA-binding</keyword>
<keyword id="KW-0723">Serine/threonine-protein kinase</keyword>
<keyword id="KW-0346">Stress response</keyword>
<keyword id="KW-0808">Transferase</keyword>
<keyword id="KW-0810">Translation regulation</keyword>
<keyword id="KW-0820">tRNA-binding</keyword>